<organism>
    <name type="scientific">Vibrio atlanticus (strain LGP32)</name>
    <name type="common">Vibrio splendidus (strain Mel32)</name>
    <dbReference type="NCBI Taxonomy" id="575788"/>
    <lineage>
        <taxon>Bacteria</taxon>
        <taxon>Pseudomonadati</taxon>
        <taxon>Pseudomonadota</taxon>
        <taxon>Gammaproteobacteria</taxon>
        <taxon>Vibrionales</taxon>
        <taxon>Vibrionaceae</taxon>
        <taxon>Vibrio</taxon>
    </lineage>
</organism>
<feature type="chain" id="PRO_1000164340" description="tRNA(Ile)-lysidine synthase">
    <location>
        <begin position="1"/>
        <end position="456"/>
    </location>
</feature>
<feature type="binding site" evidence="1">
    <location>
        <begin position="27"/>
        <end position="32"/>
    </location>
    <ligand>
        <name>ATP</name>
        <dbReference type="ChEBI" id="CHEBI:30616"/>
    </ligand>
</feature>
<proteinExistence type="inferred from homology"/>
<keyword id="KW-0067">ATP-binding</keyword>
<keyword id="KW-0963">Cytoplasm</keyword>
<keyword id="KW-0436">Ligase</keyword>
<keyword id="KW-0547">Nucleotide-binding</keyword>
<keyword id="KW-0819">tRNA processing</keyword>
<reference key="1">
    <citation type="submission" date="2009-02" db="EMBL/GenBank/DDBJ databases">
        <title>Vibrio splendidus str. LGP32 complete genome.</title>
        <authorList>
            <person name="Mazel D."/>
            <person name="Le Roux F."/>
        </authorList>
    </citation>
    <scope>NUCLEOTIDE SEQUENCE [LARGE SCALE GENOMIC DNA]</scope>
    <source>
        <strain>LGP32</strain>
    </source>
</reference>
<protein>
    <recommendedName>
        <fullName evidence="1">tRNA(Ile)-lysidine synthase</fullName>
        <ecNumber evidence="1">6.3.4.19</ecNumber>
    </recommendedName>
    <alternativeName>
        <fullName evidence="1">tRNA(Ile)-2-lysyl-cytidine synthase</fullName>
    </alternativeName>
    <alternativeName>
        <fullName evidence="1">tRNA(Ile)-lysidine synthetase</fullName>
    </alternativeName>
</protein>
<comment type="function">
    <text evidence="1">Ligates lysine onto the cytidine present at position 34 of the AUA codon-specific tRNA(Ile) that contains the anticodon CAU, in an ATP-dependent manner. Cytidine is converted to lysidine, thus changing the amino acid specificity of the tRNA from methionine to isoleucine.</text>
</comment>
<comment type="catalytic activity">
    <reaction evidence="1">
        <text>cytidine(34) in tRNA(Ile2) + L-lysine + ATP = lysidine(34) in tRNA(Ile2) + AMP + diphosphate + H(+)</text>
        <dbReference type="Rhea" id="RHEA:43744"/>
        <dbReference type="Rhea" id="RHEA-COMP:10625"/>
        <dbReference type="Rhea" id="RHEA-COMP:10670"/>
        <dbReference type="ChEBI" id="CHEBI:15378"/>
        <dbReference type="ChEBI" id="CHEBI:30616"/>
        <dbReference type="ChEBI" id="CHEBI:32551"/>
        <dbReference type="ChEBI" id="CHEBI:33019"/>
        <dbReference type="ChEBI" id="CHEBI:82748"/>
        <dbReference type="ChEBI" id="CHEBI:83665"/>
        <dbReference type="ChEBI" id="CHEBI:456215"/>
        <dbReference type="EC" id="6.3.4.19"/>
    </reaction>
</comment>
<comment type="subcellular location">
    <subcellularLocation>
        <location evidence="1">Cytoplasm</location>
    </subcellularLocation>
</comment>
<comment type="domain">
    <text>The N-terminal region contains the highly conserved SGGXDS motif, predicted to be a P-loop motif involved in ATP binding.</text>
</comment>
<comment type="similarity">
    <text evidence="1">Belongs to the tRNA(Ile)-lysidine synthase family.</text>
</comment>
<sequence>MTHLIETFTSVLHQSALKPSRLIVAFSGGVDSRVLLELAAQYAQTHGIECCAVHVHHGLSKNADLWAEQCQTWCDALSVSLAVERVSLDINCGESVEKLARDARYQAFQQHIRQGDVLVTGQHIDDQLETFLLALKRGSGPKGLSSMAKVMSFGEAFIVRPLLSVTRLDIEASAHDMGLTWVEDESNQDLRFDRNFIRHQVTPTLTERWPSFRESVCRSAQLCAEQESLLDELLESHLQQALGGCNSKSNSKSNSKSQSLSIDSLSQHSDLLRARLIRMWLSHCNQPMPSQKQLKLIWDEVACAQADANPKLVLNDVEIRRFNNQLYLVQDTKDLSSWKSEILIDENLLLPDGLGEIHLKAVSSGSASHNRDVQRFSLTKANGTLRVIFNPEGVSAHPVGRGHSRKLKKLFQEYQVPSWLRRRTPILMDGDRVIAVLGLFVDKNYEGQDCEALWSK</sequence>
<accession>B7VIQ1</accession>
<evidence type="ECO:0000255" key="1">
    <source>
        <dbReference type="HAMAP-Rule" id="MF_01161"/>
    </source>
</evidence>
<gene>
    <name evidence="1" type="primary">tilS</name>
    <name type="ordered locus">VS_2335</name>
</gene>
<name>TILS_VIBA3</name>
<dbReference type="EC" id="6.3.4.19" evidence="1"/>
<dbReference type="EMBL" id="FM954972">
    <property type="protein sequence ID" value="CAV19497.1"/>
    <property type="molecule type" value="Genomic_DNA"/>
</dbReference>
<dbReference type="SMR" id="B7VIQ1"/>
<dbReference type="STRING" id="575788.VS_2335"/>
<dbReference type="KEGG" id="vsp:VS_2335"/>
<dbReference type="PATRIC" id="fig|575788.5.peg.3598"/>
<dbReference type="eggNOG" id="COG0037">
    <property type="taxonomic scope" value="Bacteria"/>
</dbReference>
<dbReference type="HOGENOM" id="CLU_018869_2_0_6"/>
<dbReference type="Proteomes" id="UP000009100">
    <property type="component" value="Chromosome 1"/>
</dbReference>
<dbReference type="GO" id="GO:0005737">
    <property type="term" value="C:cytoplasm"/>
    <property type="evidence" value="ECO:0007669"/>
    <property type="project" value="UniProtKB-SubCell"/>
</dbReference>
<dbReference type="GO" id="GO:0005524">
    <property type="term" value="F:ATP binding"/>
    <property type="evidence" value="ECO:0007669"/>
    <property type="project" value="UniProtKB-UniRule"/>
</dbReference>
<dbReference type="GO" id="GO:0032267">
    <property type="term" value="F:tRNA(Ile)-lysidine synthase activity"/>
    <property type="evidence" value="ECO:0007669"/>
    <property type="project" value="UniProtKB-EC"/>
</dbReference>
<dbReference type="GO" id="GO:0006400">
    <property type="term" value="P:tRNA modification"/>
    <property type="evidence" value="ECO:0007669"/>
    <property type="project" value="UniProtKB-UniRule"/>
</dbReference>
<dbReference type="CDD" id="cd01992">
    <property type="entry name" value="TilS_N"/>
    <property type="match status" value="1"/>
</dbReference>
<dbReference type="Gene3D" id="1.20.59.20">
    <property type="match status" value="1"/>
</dbReference>
<dbReference type="Gene3D" id="3.40.50.620">
    <property type="entry name" value="HUPs"/>
    <property type="match status" value="1"/>
</dbReference>
<dbReference type="HAMAP" id="MF_01161">
    <property type="entry name" value="tRNA_Ile_lys_synt"/>
    <property type="match status" value="1"/>
</dbReference>
<dbReference type="InterPro" id="IPR012796">
    <property type="entry name" value="Lysidine-tRNA-synth_C"/>
</dbReference>
<dbReference type="InterPro" id="IPR014729">
    <property type="entry name" value="Rossmann-like_a/b/a_fold"/>
</dbReference>
<dbReference type="InterPro" id="IPR011063">
    <property type="entry name" value="TilS/TtcA_N"/>
</dbReference>
<dbReference type="InterPro" id="IPR012094">
    <property type="entry name" value="tRNA_Ile_lys_synt"/>
</dbReference>
<dbReference type="InterPro" id="IPR012795">
    <property type="entry name" value="tRNA_Ile_lys_synt_N"/>
</dbReference>
<dbReference type="InterPro" id="IPR015262">
    <property type="entry name" value="tRNA_Ile_lys_synt_subst-bd"/>
</dbReference>
<dbReference type="NCBIfam" id="TIGR02433">
    <property type="entry name" value="lysidine_TilS_C"/>
    <property type="match status" value="1"/>
</dbReference>
<dbReference type="NCBIfam" id="TIGR02432">
    <property type="entry name" value="lysidine_TilS_N"/>
    <property type="match status" value="1"/>
</dbReference>
<dbReference type="PANTHER" id="PTHR43033">
    <property type="entry name" value="TRNA(ILE)-LYSIDINE SYNTHASE-RELATED"/>
    <property type="match status" value="1"/>
</dbReference>
<dbReference type="PANTHER" id="PTHR43033:SF1">
    <property type="entry name" value="TRNA(ILE)-LYSIDINE SYNTHASE-RELATED"/>
    <property type="match status" value="1"/>
</dbReference>
<dbReference type="Pfam" id="PF01171">
    <property type="entry name" value="ATP_bind_3"/>
    <property type="match status" value="1"/>
</dbReference>
<dbReference type="Pfam" id="PF09179">
    <property type="entry name" value="TilS"/>
    <property type="match status" value="1"/>
</dbReference>
<dbReference type="Pfam" id="PF11734">
    <property type="entry name" value="TilS_C"/>
    <property type="match status" value="1"/>
</dbReference>
<dbReference type="SMART" id="SM00977">
    <property type="entry name" value="TilS_C"/>
    <property type="match status" value="1"/>
</dbReference>
<dbReference type="SUPFAM" id="SSF52402">
    <property type="entry name" value="Adenine nucleotide alpha hydrolases-like"/>
    <property type="match status" value="1"/>
</dbReference>
<dbReference type="SUPFAM" id="SSF82829">
    <property type="entry name" value="MesJ substrate recognition domain-like"/>
    <property type="match status" value="1"/>
</dbReference>
<dbReference type="SUPFAM" id="SSF56037">
    <property type="entry name" value="PheT/TilS domain"/>
    <property type="match status" value="1"/>
</dbReference>